<protein>
    <recommendedName>
        <fullName>Flagellar motor switch phosphatase FliY</fullName>
        <ecNumber>3.-.-.-</ecNumber>
    </recommendedName>
    <alternativeName>
        <fullName>CheY-P phosphatase FliY</fullName>
    </alternativeName>
    <alternativeName>
        <fullName>Flagellar motor switch protein FliY</fullName>
    </alternativeName>
</protein>
<sequence length="378" mass="41052">MENNRLSQDEIDALLNGTGSTLDEPEIPEVDDLSEMERDAIGEIGNISFGSSATALSTLLNQKVDITTPSVTVIPRSKISDAFPEPYVAIEVNYTEGFSGSNLLVVEQSDAAIIADLMIGGDGKGADPSLGEIHLSAVQEAMNQMMGSAATSMSTVFSKKIDISPPRVELLDVTEEKGTDRIPDDEMLVKVSFNLKVGELIDSSIMQLYPLTFAKDLISSLMNSESAEEEETVQPEVTYEQPKEPVTPEPRIEPKQQQQPPKRQGTAKKAAPVQVSPVEFSAFDPNEAVQAPIHNLDMLLDIPLSITVELGRTKRSVKEILELSAGSIIELDKLAGEPVDILVNQRIVAKGEVVVIEENFGVRVTDILSQAERINNLK</sequence>
<feature type="chain" id="PRO_0000184133" description="Flagellar motor switch phosphatase FliY">
    <location>
        <begin position="1"/>
        <end position="378"/>
    </location>
</feature>
<feature type="region of interest" description="Disordered" evidence="2">
    <location>
        <begin position="225"/>
        <end position="271"/>
    </location>
</feature>
<feature type="compositionally biased region" description="Low complexity" evidence="2">
    <location>
        <begin position="255"/>
        <end position="264"/>
    </location>
</feature>
<keyword id="KW-1003">Cell membrane</keyword>
<keyword id="KW-0145">Chemotaxis</keyword>
<keyword id="KW-0283">Flagellar rotation</keyword>
<keyword id="KW-0378">Hydrolase</keyword>
<keyword id="KW-0472">Membrane</keyword>
<keyword id="KW-1185">Reference proteome</keyword>
<organism>
    <name type="scientific">Bacillus subtilis (strain 168)</name>
    <dbReference type="NCBI Taxonomy" id="224308"/>
    <lineage>
        <taxon>Bacteria</taxon>
        <taxon>Bacillati</taxon>
        <taxon>Bacillota</taxon>
        <taxon>Bacilli</taxon>
        <taxon>Bacillales</taxon>
        <taxon>Bacillaceae</taxon>
        <taxon>Bacillus</taxon>
    </lineage>
</organism>
<name>FLIY_BACSU</name>
<evidence type="ECO:0000250" key="1"/>
<evidence type="ECO:0000256" key="2">
    <source>
        <dbReference type="SAM" id="MobiDB-lite"/>
    </source>
</evidence>
<evidence type="ECO:0000269" key="3">
    <source>
    </source>
</evidence>
<evidence type="ECO:0000269" key="4">
    <source>
    </source>
</evidence>
<evidence type="ECO:0000305" key="5"/>
<accession>P24073</accession>
<gene>
    <name type="primary">fliY</name>
    <name type="synonym">cheD</name>
    <name type="ordered locus">BSU16320</name>
</gene>
<proteinExistence type="inferred from homology"/>
<reference key="1">
    <citation type="journal article" date="1992" name="Mol. Microbiol.">
        <title>Identification and characterization of FliY, a novel component of the Bacillus subtilis flagellar switch complex.</title>
        <authorList>
            <person name="Bischoff D.S."/>
            <person name="Ordal G.W."/>
        </authorList>
    </citation>
    <scope>NUCLEOTIDE SEQUENCE [GENOMIC DNA]</scope>
    <source>
        <strain>168 / OI1085</strain>
    </source>
</reference>
<reference key="2">
    <citation type="journal article" date="1997" name="Nature">
        <title>The complete genome sequence of the Gram-positive bacterium Bacillus subtilis.</title>
        <authorList>
            <person name="Kunst F."/>
            <person name="Ogasawara N."/>
            <person name="Moszer I."/>
            <person name="Albertini A.M."/>
            <person name="Alloni G."/>
            <person name="Azevedo V."/>
            <person name="Bertero M.G."/>
            <person name="Bessieres P."/>
            <person name="Bolotin A."/>
            <person name="Borchert S."/>
            <person name="Borriss R."/>
            <person name="Boursier L."/>
            <person name="Brans A."/>
            <person name="Braun M."/>
            <person name="Brignell S.C."/>
            <person name="Bron S."/>
            <person name="Brouillet S."/>
            <person name="Bruschi C.V."/>
            <person name="Caldwell B."/>
            <person name="Capuano V."/>
            <person name="Carter N.M."/>
            <person name="Choi S.-K."/>
            <person name="Codani J.-J."/>
            <person name="Connerton I.F."/>
            <person name="Cummings N.J."/>
            <person name="Daniel R.A."/>
            <person name="Denizot F."/>
            <person name="Devine K.M."/>
            <person name="Duesterhoeft A."/>
            <person name="Ehrlich S.D."/>
            <person name="Emmerson P.T."/>
            <person name="Entian K.-D."/>
            <person name="Errington J."/>
            <person name="Fabret C."/>
            <person name="Ferrari E."/>
            <person name="Foulger D."/>
            <person name="Fritz C."/>
            <person name="Fujita M."/>
            <person name="Fujita Y."/>
            <person name="Fuma S."/>
            <person name="Galizzi A."/>
            <person name="Galleron N."/>
            <person name="Ghim S.-Y."/>
            <person name="Glaser P."/>
            <person name="Goffeau A."/>
            <person name="Golightly E.J."/>
            <person name="Grandi G."/>
            <person name="Guiseppi G."/>
            <person name="Guy B.J."/>
            <person name="Haga K."/>
            <person name="Haiech J."/>
            <person name="Harwood C.R."/>
            <person name="Henaut A."/>
            <person name="Hilbert H."/>
            <person name="Holsappel S."/>
            <person name="Hosono S."/>
            <person name="Hullo M.-F."/>
            <person name="Itaya M."/>
            <person name="Jones L.-M."/>
            <person name="Joris B."/>
            <person name="Karamata D."/>
            <person name="Kasahara Y."/>
            <person name="Klaerr-Blanchard M."/>
            <person name="Klein C."/>
            <person name="Kobayashi Y."/>
            <person name="Koetter P."/>
            <person name="Koningstein G."/>
            <person name="Krogh S."/>
            <person name="Kumano M."/>
            <person name="Kurita K."/>
            <person name="Lapidus A."/>
            <person name="Lardinois S."/>
            <person name="Lauber J."/>
            <person name="Lazarevic V."/>
            <person name="Lee S.-M."/>
            <person name="Levine A."/>
            <person name="Liu H."/>
            <person name="Masuda S."/>
            <person name="Mauel C."/>
            <person name="Medigue C."/>
            <person name="Medina N."/>
            <person name="Mellado R.P."/>
            <person name="Mizuno M."/>
            <person name="Moestl D."/>
            <person name="Nakai S."/>
            <person name="Noback M."/>
            <person name="Noone D."/>
            <person name="O'Reilly M."/>
            <person name="Ogawa K."/>
            <person name="Ogiwara A."/>
            <person name="Oudega B."/>
            <person name="Park S.-H."/>
            <person name="Parro V."/>
            <person name="Pohl T.M."/>
            <person name="Portetelle D."/>
            <person name="Porwollik S."/>
            <person name="Prescott A.M."/>
            <person name="Presecan E."/>
            <person name="Pujic P."/>
            <person name="Purnelle B."/>
            <person name="Rapoport G."/>
            <person name="Rey M."/>
            <person name="Reynolds S."/>
            <person name="Rieger M."/>
            <person name="Rivolta C."/>
            <person name="Rocha E."/>
            <person name="Roche B."/>
            <person name="Rose M."/>
            <person name="Sadaie Y."/>
            <person name="Sato T."/>
            <person name="Scanlan E."/>
            <person name="Schleich S."/>
            <person name="Schroeter R."/>
            <person name="Scoffone F."/>
            <person name="Sekiguchi J."/>
            <person name="Sekowska A."/>
            <person name="Seror S.J."/>
            <person name="Serror P."/>
            <person name="Shin B.-S."/>
            <person name="Soldo B."/>
            <person name="Sorokin A."/>
            <person name="Tacconi E."/>
            <person name="Takagi T."/>
            <person name="Takahashi H."/>
            <person name="Takemaru K."/>
            <person name="Takeuchi M."/>
            <person name="Tamakoshi A."/>
            <person name="Tanaka T."/>
            <person name="Terpstra P."/>
            <person name="Tognoni A."/>
            <person name="Tosato V."/>
            <person name="Uchiyama S."/>
            <person name="Vandenbol M."/>
            <person name="Vannier F."/>
            <person name="Vassarotti A."/>
            <person name="Viari A."/>
            <person name="Wambutt R."/>
            <person name="Wedler E."/>
            <person name="Wedler H."/>
            <person name="Weitzenegger T."/>
            <person name="Winters P."/>
            <person name="Wipat A."/>
            <person name="Yamamoto H."/>
            <person name="Yamane K."/>
            <person name="Yasumoto K."/>
            <person name="Yata K."/>
            <person name="Yoshida K."/>
            <person name="Yoshikawa H.-F."/>
            <person name="Zumstein E."/>
            <person name="Yoshikawa H."/>
            <person name="Danchin A."/>
        </authorList>
    </citation>
    <scope>NUCLEOTIDE SEQUENCE [LARGE SCALE GENOMIC DNA]</scope>
    <source>
        <strain>168</strain>
    </source>
</reference>
<reference key="3">
    <citation type="journal article" date="1991" name="J. Bacteriol.">
        <title>Nucleotide sequence and characterization of a Bacillus subtilis gene encoding a flagellar switch protein.</title>
        <authorList>
            <person name="Zuberi A.R."/>
            <person name="Bischoff D.S."/>
            <person name="Ordal G.W."/>
        </authorList>
    </citation>
    <scope>NUCLEOTIDE SEQUENCE [GENOMIC DNA] OF 1-60</scope>
</reference>
<reference key="4">
    <citation type="journal article" date="2003" name="J. Biol. Chem.">
        <title>Bacillus subtilis hydrolyzes CheY-P at the location of its action, the flagellar switch.</title>
        <authorList>
            <person name="Szurmant H."/>
            <person name="Bunn M.W."/>
            <person name="Cannistraro V.J."/>
            <person name="Ordal G.W."/>
        </authorList>
    </citation>
    <scope>FUNCTION</scope>
</reference>
<reference key="5">
    <citation type="journal article" date="2004" name="J. Biol. Chem.">
        <title>Bacillus subtilis CheC and FliY are members of a novel class of CheY-P-hydrolyzing proteins in the chemotactic signal transduction cascade.</title>
        <authorList>
            <person name="Szurmant H."/>
            <person name="Muff T.J."/>
            <person name="Ordal G.W."/>
        </authorList>
    </citation>
    <scope>FUNCTION</scope>
</reference>
<dbReference type="EC" id="3.-.-.-"/>
<dbReference type="EMBL" id="M86738">
    <property type="protein sequence ID" value="AAA22449.1"/>
    <property type="molecule type" value="Genomic_DNA"/>
</dbReference>
<dbReference type="EMBL" id="AL009126">
    <property type="protein sequence ID" value="CAB13505.1"/>
    <property type="molecule type" value="Genomic_DNA"/>
</dbReference>
<dbReference type="EMBL" id="M37691">
    <property type="protein sequence ID" value="AAA22447.1"/>
    <property type="molecule type" value="Genomic_DNA"/>
</dbReference>
<dbReference type="PIR" id="S25279">
    <property type="entry name" value="S25279"/>
</dbReference>
<dbReference type="RefSeq" id="NP_389514.1">
    <property type="nucleotide sequence ID" value="NC_000964.3"/>
</dbReference>
<dbReference type="RefSeq" id="WP_003231962.1">
    <property type="nucleotide sequence ID" value="NZ_OZ025638.1"/>
</dbReference>
<dbReference type="SMR" id="P24073"/>
<dbReference type="FunCoup" id="P24073">
    <property type="interactions" value="67"/>
</dbReference>
<dbReference type="STRING" id="224308.BSU16320"/>
<dbReference type="jPOST" id="P24073"/>
<dbReference type="PaxDb" id="224308-BSU16320"/>
<dbReference type="EnsemblBacteria" id="CAB13505">
    <property type="protein sequence ID" value="CAB13505"/>
    <property type="gene ID" value="BSU_16320"/>
</dbReference>
<dbReference type="GeneID" id="936421"/>
<dbReference type="KEGG" id="bsu:BSU16320"/>
<dbReference type="PATRIC" id="fig|224308.179.peg.1773"/>
<dbReference type="eggNOG" id="COG1776">
    <property type="taxonomic scope" value="Bacteria"/>
</dbReference>
<dbReference type="eggNOG" id="COG1886">
    <property type="taxonomic scope" value="Bacteria"/>
</dbReference>
<dbReference type="InParanoid" id="P24073"/>
<dbReference type="OrthoDB" id="9773459at2"/>
<dbReference type="PhylomeDB" id="P24073"/>
<dbReference type="BioCyc" id="BSUB:BSU16320-MONOMER"/>
<dbReference type="Proteomes" id="UP000001570">
    <property type="component" value="Chromosome"/>
</dbReference>
<dbReference type="GO" id="GO:0009425">
    <property type="term" value="C:bacterial-type flagellum basal body"/>
    <property type="evidence" value="ECO:0007669"/>
    <property type="project" value="InterPro"/>
</dbReference>
<dbReference type="GO" id="GO:0005886">
    <property type="term" value="C:plasma membrane"/>
    <property type="evidence" value="ECO:0007669"/>
    <property type="project" value="UniProtKB-SubCell"/>
</dbReference>
<dbReference type="GO" id="GO:0003774">
    <property type="term" value="F:cytoskeletal motor activity"/>
    <property type="evidence" value="ECO:0007669"/>
    <property type="project" value="InterPro"/>
</dbReference>
<dbReference type="GO" id="GO:0004721">
    <property type="term" value="F:phosphoprotein phosphatase activity"/>
    <property type="evidence" value="ECO:0000314"/>
    <property type="project" value="CACAO"/>
</dbReference>
<dbReference type="GO" id="GO:0044780">
    <property type="term" value="P:bacterial-type flagellum assembly"/>
    <property type="evidence" value="ECO:0000315"/>
    <property type="project" value="CACAO"/>
</dbReference>
<dbReference type="GO" id="GO:0071978">
    <property type="term" value="P:bacterial-type flagellum-dependent swarming motility"/>
    <property type="evidence" value="ECO:0000315"/>
    <property type="project" value="CACAO"/>
</dbReference>
<dbReference type="GO" id="GO:0006935">
    <property type="term" value="P:chemotaxis"/>
    <property type="evidence" value="ECO:0000315"/>
    <property type="project" value="CACAO"/>
</dbReference>
<dbReference type="GO" id="GO:0016311">
    <property type="term" value="P:dephosphorylation"/>
    <property type="evidence" value="ECO:0000315"/>
    <property type="project" value="CACAO"/>
</dbReference>
<dbReference type="GO" id="GO:1902021">
    <property type="term" value="P:regulation of bacterial-type flagellum-dependent cell motility"/>
    <property type="evidence" value="ECO:0000315"/>
    <property type="project" value="CACAO"/>
</dbReference>
<dbReference type="CDD" id="cd17907">
    <property type="entry name" value="FliY_FliN-Y"/>
    <property type="match status" value="1"/>
</dbReference>
<dbReference type="FunFam" id="3.40.1550.10:FF:000003">
    <property type="entry name" value="Flagellar motor switch phosphatase FliY"/>
    <property type="match status" value="1"/>
</dbReference>
<dbReference type="Gene3D" id="3.40.1550.10">
    <property type="entry name" value="CheC-like"/>
    <property type="match status" value="1"/>
</dbReference>
<dbReference type="Gene3D" id="2.30.330.10">
    <property type="entry name" value="SpoA-like"/>
    <property type="match status" value="1"/>
</dbReference>
<dbReference type="InterPro" id="IPR007597">
    <property type="entry name" value="CheC"/>
</dbReference>
<dbReference type="InterPro" id="IPR028976">
    <property type="entry name" value="CheC-like_sf"/>
</dbReference>
<dbReference type="InterPro" id="IPR012826">
    <property type="entry name" value="FliN"/>
</dbReference>
<dbReference type="InterPro" id="IPR001543">
    <property type="entry name" value="FliN-like_C"/>
</dbReference>
<dbReference type="InterPro" id="IPR051469">
    <property type="entry name" value="FliN/MopA/SpaO"/>
</dbReference>
<dbReference type="InterPro" id="IPR001172">
    <property type="entry name" value="FliN_T3SS_HrcQb"/>
</dbReference>
<dbReference type="InterPro" id="IPR036429">
    <property type="entry name" value="SpoA-like_sf"/>
</dbReference>
<dbReference type="NCBIfam" id="TIGR02480">
    <property type="entry name" value="fliN"/>
    <property type="match status" value="1"/>
</dbReference>
<dbReference type="NCBIfam" id="NF005995">
    <property type="entry name" value="PRK08119.1"/>
    <property type="match status" value="1"/>
</dbReference>
<dbReference type="PANTHER" id="PTHR43484">
    <property type="match status" value="1"/>
</dbReference>
<dbReference type="PANTHER" id="PTHR43484:SF1">
    <property type="entry name" value="FLAGELLAR MOTOR SWITCH PROTEIN FLIN"/>
    <property type="match status" value="1"/>
</dbReference>
<dbReference type="Pfam" id="PF04509">
    <property type="entry name" value="CheC"/>
    <property type="match status" value="2"/>
</dbReference>
<dbReference type="Pfam" id="PF01052">
    <property type="entry name" value="FliMN_C"/>
    <property type="match status" value="1"/>
</dbReference>
<dbReference type="PRINTS" id="PR00956">
    <property type="entry name" value="FLGMOTORFLIN"/>
</dbReference>
<dbReference type="SUPFAM" id="SSF103039">
    <property type="entry name" value="CheC-like"/>
    <property type="match status" value="1"/>
</dbReference>
<dbReference type="SUPFAM" id="SSF101801">
    <property type="entry name" value="Surface presentation of antigens (SPOA)"/>
    <property type="match status" value="1"/>
</dbReference>
<comment type="function">
    <text evidence="3 4">Component of the flagellar switch. Binds CheY-P and increases its hydrolysis rate in vitro. May function constitutively to remove CheY-P around the flagellar switch to maintain an optimal level of CheY-P whereas CheC may function after addition of an attractant to cope with increased levels of CheY-P.</text>
</comment>
<comment type="subcellular location">
    <subcellularLocation>
        <location evidence="1">Cell membrane</location>
        <topology evidence="1">Peripheral membrane protein</topology>
        <orientation evidence="1">Cytoplasmic side</orientation>
    </subcellularLocation>
    <text evidence="1">The switch is localized at the base of the flagellar motor, in or near the C-ring, attached to the MS-ring.</text>
</comment>
<comment type="similarity">
    <text evidence="5">Belongs to the FliN/MopA/SpaO family.</text>
</comment>